<dbReference type="EC" id="5.2.1.8" evidence="1"/>
<dbReference type="EMBL" id="CP001120">
    <property type="protein sequence ID" value="ACF66619.1"/>
    <property type="molecule type" value="Genomic_DNA"/>
</dbReference>
<dbReference type="RefSeq" id="WP_001198406.1">
    <property type="nucleotide sequence ID" value="NC_011083.1"/>
</dbReference>
<dbReference type="SMR" id="B4T9E2"/>
<dbReference type="KEGG" id="seh:SeHA_C0550"/>
<dbReference type="HOGENOM" id="CLU_033058_2_0_6"/>
<dbReference type="Proteomes" id="UP000001866">
    <property type="component" value="Chromosome"/>
</dbReference>
<dbReference type="GO" id="GO:0005737">
    <property type="term" value="C:cytoplasm"/>
    <property type="evidence" value="ECO:0007669"/>
    <property type="project" value="UniProtKB-SubCell"/>
</dbReference>
<dbReference type="GO" id="GO:0003755">
    <property type="term" value="F:peptidyl-prolyl cis-trans isomerase activity"/>
    <property type="evidence" value="ECO:0007669"/>
    <property type="project" value="UniProtKB-UniRule"/>
</dbReference>
<dbReference type="GO" id="GO:0044183">
    <property type="term" value="F:protein folding chaperone"/>
    <property type="evidence" value="ECO:0007669"/>
    <property type="project" value="TreeGrafter"/>
</dbReference>
<dbReference type="GO" id="GO:0043022">
    <property type="term" value="F:ribosome binding"/>
    <property type="evidence" value="ECO:0007669"/>
    <property type="project" value="TreeGrafter"/>
</dbReference>
<dbReference type="GO" id="GO:0051083">
    <property type="term" value="P:'de novo' cotranslational protein folding"/>
    <property type="evidence" value="ECO:0007669"/>
    <property type="project" value="TreeGrafter"/>
</dbReference>
<dbReference type="GO" id="GO:0051301">
    <property type="term" value="P:cell division"/>
    <property type="evidence" value="ECO:0007669"/>
    <property type="project" value="UniProtKB-KW"/>
</dbReference>
<dbReference type="GO" id="GO:0061077">
    <property type="term" value="P:chaperone-mediated protein folding"/>
    <property type="evidence" value="ECO:0007669"/>
    <property type="project" value="TreeGrafter"/>
</dbReference>
<dbReference type="GO" id="GO:0015031">
    <property type="term" value="P:protein transport"/>
    <property type="evidence" value="ECO:0007669"/>
    <property type="project" value="UniProtKB-UniRule"/>
</dbReference>
<dbReference type="GO" id="GO:0043335">
    <property type="term" value="P:protein unfolding"/>
    <property type="evidence" value="ECO:0007669"/>
    <property type="project" value="TreeGrafter"/>
</dbReference>
<dbReference type="FunFam" id="1.10.3120.10:FF:000001">
    <property type="entry name" value="Trigger factor"/>
    <property type="match status" value="1"/>
</dbReference>
<dbReference type="FunFam" id="3.10.50.40:FF:000001">
    <property type="entry name" value="Trigger factor"/>
    <property type="match status" value="1"/>
</dbReference>
<dbReference type="FunFam" id="3.30.70.1050:FF:000001">
    <property type="entry name" value="Trigger factor"/>
    <property type="match status" value="1"/>
</dbReference>
<dbReference type="Gene3D" id="3.10.50.40">
    <property type="match status" value="1"/>
</dbReference>
<dbReference type="Gene3D" id="3.30.70.1050">
    <property type="entry name" value="Trigger factor ribosome-binding domain"/>
    <property type="match status" value="1"/>
</dbReference>
<dbReference type="Gene3D" id="1.10.3120.10">
    <property type="entry name" value="Trigger factor, C-terminal domain"/>
    <property type="match status" value="1"/>
</dbReference>
<dbReference type="HAMAP" id="MF_00303">
    <property type="entry name" value="Trigger_factor_Tig"/>
    <property type="match status" value="1"/>
</dbReference>
<dbReference type="InterPro" id="IPR046357">
    <property type="entry name" value="PPIase_dom_sf"/>
</dbReference>
<dbReference type="InterPro" id="IPR001179">
    <property type="entry name" value="PPIase_FKBP_dom"/>
</dbReference>
<dbReference type="InterPro" id="IPR005215">
    <property type="entry name" value="Trig_fac"/>
</dbReference>
<dbReference type="InterPro" id="IPR008880">
    <property type="entry name" value="Trigger_fac_C"/>
</dbReference>
<dbReference type="InterPro" id="IPR037041">
    <property type="entry name" value="Trigger_fac_C_sf"/>
</dbReference>
<dbReference type="InterPro" id="IPR008881">
    <property type="entry name" value="Trigger_fac_ribosome-bd_bac"/>
</dbReference>
<dbReference type="InterPro" id="IPR036611">
    <property type="entry name" value="Trigger_fac_ribosome-bd_sf"/>
</dbReference>
<dbReference type="InterPro" id="IPR027304">
    <property type="entry name" value="Trigger_fact/SurA_dom_sf"/>
</dbReference>
<dbReference type="NCBIfam" id="TIGR00115">
    <property type="entry name" value="tig"/>
    <property type="match status" value="1"/>
</dbReference>
<dbReference type="PANTHER" id="PTHR30560">
    <property type="entry name" value="TRIGGER FACTOR CHAPERONE AND PEPTIDYL-PROLYL CIS/TRANS ISOMERASE"/>
    <property type="match status" value="1"/>
</dbReference>
<dbReference type="PANTHER" id="PTHR30560:SF3">
    <property type="entry name" value="TRIGGER FACTOR-LIKE PROTEIN TIG, CHLOROPLASTIC"/>
    <property type="match status" value="1"/>
</dbReference>
<dbReference type="Pfam" id="PF00254">
    <property type="entry name" value="FKBP_C"/>
    <property type="match status" value="1"/>
</dbReference>
<dbReference type="Pfam" id="PF05698">
    <property type="entry name" value="Trigger_C"/>
    <property type="match status" value="1"/>
</dbReference>
<dbReference type="Pfam" id="PF05697">
    <property type="entry name" value="Trigger_N"/>
    <property type="match status" value="1"/>
</dbReference>
<dbReference type="PIRSF" id="PIRSF003095">
    <property type="entry name" value="Trigger_factor"/>
    <property type="match status" value="1"/>
</dbReference>
<dbReference type="SUPFAM" id="SSF54534">
    <property type="entry name" value="FKBP-like"/>
    <property type="match status" value="1"/>
</dbReference>
<dbReference type="SUPFAM" id="SSF109998">
    <property type="entry name" value="Triger factor/SurA peptide-binding domain-like"/>
    <property type="match status" value="1"/>
</dbReference>
<dbReference type="SUPFAM" id="SSF102735">
    <property type="entry name" value="Trigger factor ribosome-binding domain"/>
    <property type="match status" value="1"/>
</dbReference>
<dbReference type="PROSITE" id="PS50059">
    <property type="entry name" value="FKBP_PPIASE"/>
    <property type="match status" value="1"/>
</dbReference>
<proteinExistence type="inferred from homology"/>
<protein>
    <recommendedName>
        <fullName evidence="1">Trigger factor</fullName>
        <shortName evidence="1">TF</shortName>
        <ecNumber evidence="1">5.2.1.8</ecNumber>
    </recommendedName>
    <alternativeName>
        <fullName evidence="1">PPIase</fullName>
    </alternativeName>
</protein>
<feature type="chain" id="PRO_1000115577" description="Trigger factor">
    <location>
        <begin position="1"/>
        <end position="432"/>
    </location>
</feature>
<feature type="domain" description="PPIase FKBP-type" evidence="1">
    <location>
        <begin position="161"/>
        <end position="246"/>
    </location>
</feature>
<comment type="function">
    <text evidence="1">Involved in protein export. Acts as a chaperone by maintaining the newly synthesized protein in an open conformation. Functions as a peptidyl-prolyl cis-trans isomerase.</text>
</comment>
<comment type="catalytic activity">
    <reaction evidence="1">
        <text>[protein]-peptidylproline (omega=180) = [protein]-peptidylproline (omega=0)</text>
        <dbReference type="Rhea" id="RHEA:16237"/>
        <dbReference type="Rhea" id="RHEA-COMP:10747"/>
        <dbReference type="Rhea" id="RHEA-COMP:10748"/>
        <dbReference type="ChEBI" id="CHEBI:83833"/>
        <dbReference type="ChEBI" id="CHEBI:83834"/>
        <dbReference type="EC" id="5.2.1.8"/>
    </reaction>
</comment>
<comment type="subcellular location">
    <subcellularLocation>
        <location>Cytoplasm</location>
    </subcellularLocation>
    <text evidence="1">About half TF is bound to the ribosome near the polypeptide exit tunnel while the other half is free in the cytoplasm.</text>
</comment>
<comment type="domain">
    <text evidence="1">Consists of 3 domains; the N-terminus binds the ribosome, the middle domain has PPIase activity, while the C-terminus has intrinsic chaperone activity on its own.</text>
</comment>
<comment type="similarity">
    <text evidence="1">Belongs to the FKBP-type PPIase family. Tig subfamily.</text>
</comment>
<sequence>MQVSVETTQGLGRRVTITIAADSIETAVKSELVNVAKKVRIDGFRKGKVPMNIVAQRYGASVRQDVLGDLMSRNFVDAIIKEKINPAGAPNYVPGEYKVGEDFTYSVEFEVYPEVELTGLESIEVEKPVVEVTDADVDVMLDTLRKQQATWKEKDGAADAEDRVTIDFTGSVDGEEFEGGKATDFVLAMGQGRMIPGFEDGVKGHKAGEEFTIDVTFPEEYHAENLKGKAAKFVINLKKVEERELPELTEEFIKRFGVEDGSVAGLRAEVRKNMERELKGAVRNRVKSQAIEGLVKANDIDVPSALIDSEIDVLRRQAAQRFGGNEKQALELPRELFEEQAKRRVVVGLLLGEVIRTNELKADEERVKGLIEEMASAYEDPKEVIEFYSKNKELMDNMRNVALEEQAVEAVLAKAKVSEKATSFNELMNQQA</sequence>
<organism>
    <name type="scientific">Salmonella heidelberg (strain SL476)</name>
    <dbReference type="NCBI Taxonomy" id="454169"/>
    <lineage>
        <taxon>Bacteria</taxon>
        <taxon>Pseudomonadati</taxon>
        <taxon>Pseudomonadota</taxon>
        <taxon>Gammaproteobacteria</taxon>
        <taxon>Enterobacterales</taxon>
        <taxon>Enterobacteriaceae</taxon>
        <taxon>Salmonella</taxon>
    </lineage>
</organism>
<evidence type="ECO:0000255" key="1">
    <source>
        <dbReference type="HAMAP-Rule" id="MF_00303"/>
    </source>
</evidence>
<keyword id="KW-0131">Cell cycle</keyword>
<keyword id="KW-0132">Cell division</keyword>
<keyword id="KW-0143">Chaperone</keyword>
<keyword id="KW-0963">Cytoplasm</keyword>
<keyword id="KW-0413">Isomerase</keyword>
<keyword id="KW-0697">Rotamase</keyword>
<gene>
    <name evidence="1" type="primary">tig</name>
    <name type="ordered locus">SeHA_C0550</name>
</gene>
<accession>B4T9E2</accession>
<reference key="1">
    <citation type="journal article" date="2011" name="J. Bacteriol.">
        <title>Comparative genomics of 28 Salmonella enterica isolates: evidence for CRISPR-mediated adaptive sublineage evolution.</title>
        <authorList>
            <person name="Fricke W.F."/>
            <person name="Mammel M.K."/>
            <person name="McDermott P.F."/>
            <person name="Tartera C."/>
            <person name="White D.G."/>
            <person name="Leclerc J.E."/>
            <person name="Ravel J."/>
            <person name="Cebula T.A."/>
        </authorList>
    </citation>
    <scope>NUCLEOTIDE SEQUENCE [LARGE SCALE GENOMIC DNA]</scope>
    <source>
        <strain>SL476</strain>
    </source>
</reference>
<name>TIG_SALHS</name>